<gene>
    <name type="primary">HOS3</name>
    <name type="ordered locus">At4g36830</name>
    <name type="ORF">AP22.81</name>
    <name type="ORF">C7A10.530</name>
</gene>
<keyword id="KW-0275">Fatty acid biosynthesis</keyword>
<keyword id="KW-0276">Fatty acid metabolism</keyword>
<keyword id="KW-0444">Lipid biosynthesis</keyword>
<keyword id="KW-0443">Lipid metabolism</keyword>
<keyword id="KW-0472">Membrane</keyword>
<keyword id="KW-1185">Reference proteome</keyword>
<keyword id="KW-0346">Stress response</keyword>
<keyword id="KW-0808">Transferase</keyword>
<keyword id="KW-0812">Transmembrane</keyword>
<keyword id="KW-1133">Transmembrane helix</keyword>
<evidence type="ECO:0000255" key="1"/>
<evidence type="ECO:0000269" key="2">
    <source>
    </source>
</evidence>
<evidence type="ECO:0000305" key="3"/>
<reference key="1">
    <citation type="journal article" date="1998" name="Nature">
        <title>Analysis of 1.9 Mb of contiguous sequence from chromosome 4 of Arabidopsis thaliana.</title>
        <authorList>
            <person name="Bevan M."/>
            <person name="Bancroft I."/>
            <person name="Bent E."/>
            <person name="Love K."/>
            <person name="Goodman H.M."/>
            <person name="Dean C."/>
            <person name="Bergkamp R."/>
            <person name="Dirkse W."/>
            <person name="van Staveren M."/>
            <person name="Stiekema W."/>
            <person name="Drost L."/>
            <person name="Ridley P."/>
            <person name="Hudson S.-A."/>
            <person name="Patel K."/>
            <person name="Murphy G."/>
            <person name="Piffanelli P."/>
            <person name="Wedler H."/>
            <person name="Wedler E."/>
            <person name="Wambutt R."/>
            <person name="Weitzenegger T."/>
            <person name="Pohl T."/>
            <person name="Terryn N."/>
            <person name="Gielen J."/>
            <person name="Villarroel R."/>
            <person name="De Clercq R."/>
            <person name="van Montagu M."/>
            <person name="Lecharny A."/>
            <person name="Aubourg S."/>
            <person name="Gy I."/>
            <person name="Kreis M."/>
            <person name="Lao N."/>
            <person name="Kavanagh T."/>
            <person name="Hempel S."/>
            <person name="Kotter P."/>
            <person name="Entian K.-D."/>
            <person name="Rieger M."/>
            <person name="Schaefer M."/>
            <person name="Funk B."/>
            <person name="Mueller-Auer S."/>
            <person name="Silvey M."/>
            <person name="James R."/>
            <person name="Monfort A."/>
            <person name="Pons A."/>
            <person name="Puigdomenech P."/>
            <person name="Douka A."/>
            <person name="Voukelatou E."/>
            <person name="Milioni D."/>
            <person name="Hatzopoulos P."/>
            <person name="Piravandi E."/>
            <person name="Obermaier B."/>
            <person name="Hilbert H."/>
            <person name="Duesterhoeft A."/>
            <person name="Moores T."/>
            <person name="Jones J.D.G."/>
            <person name="Eneva T."/>
            <person name="Palme K."/>
            <person name="Benes V."/>
            <person name="Rechmann S."/>
            <person name="Ansorge W."/>
            <person name="Cooke R."/>
            <person name="Berger C."/>
            <person name="Delseny M."/>
            <person name="Voet M."/>
            <person name="Volckaert G."/>
            <person name="Mewes H.-W."/>
            <person name="Klosterman S."/>
            <person name="Schueller C."/>
            <person name="Chalwatzis N."/>
        </authorList>
    </citation>
    <scope>NUCLEOTIDE SEQUENCE [LARGE SCALE GENOMIC DNA]</scope>
    <source>
        <strain>cv. Columbia</strain>
    </source>
</reference>
<reference key="2">
    <citation type="journal article" date="1999" name="Nature">
        <title>Sequence and analysis of chromosome 4 of the plant Arabidopsis thaliana.</title>
        <authorList>
            <person name="Mayer K.F.X."/>
            <person name="Schueller C."/>
            <person name="Wambutt R."/>
            <person name="Murphy G."/>
            <person name="Volckaert G."/>
            <person name="Pohl T."/>
            <person name="Duesterhoeft A."/>
            <person name="Stiekema W."/>
            <person name="Entian K.-D."/>
            <person name="Terryn N."/>
            <person name="Harris B."/>
            <person name="Ansorge W."/>
            <person name="Brandt P."/>
            <person name="Grivell L.A."/>
            <person name="Rieger M."/>
            <person name="Weichselgartner M."/>
            <person name="de Simone V."/>
            <person name="Obermaier B."/>
            <person name="Mache R."/>
            <person name="Mueller M."/>
            <person name="Kreis M."/>
            <person name="Delseny M."/>
            <person name="Puigdomenech P."/>
            <person name="Watson M."/>
            <person name="Schmidtheini T."/>
            <person name="Reichert B."/>
            <person name="Portetelle D."/>
            <person name="Perez-Alonso M."/>
            <person name="Boutry M."/>
            <person name="Bancroft I."/>
            <person name="Vos P."/>
            <person name="Hoheisel J."/>
            <person name="Zimmermann W."/>
            <person name="Wedler H."/>
            <person name="Ridley P."/>
            <person name="Langham S.-A."/>
            <person name="McCullagh B."/>
            <person name="Bilham L."/>
            <person name="Robben J."/>
            <person name="van der Schueren J."/>
            <person name="Grymonprez B."/>
            <person name="Chuang Y.-J."/>
            <person name="Vandenbussche F."/>
            <person name="Braeken M."/>
            <person name="Weltjens I."/>
            <person name="Voet M."/>
            <person name="Bastiaens I."/>
            <person name="Aert R."/>
            <person name="Defoor E."/>
            <person name="Weitzenegger T."/>
            <person name="Bothe G."/>
            <person name="Ramsperger U."/>
            <person name="Hilbert H."/>
            <person name="Braun M."/>
            <person name="Holzer E."/>
            <person name="Brandt A."/>
            <person name="Peters S."/>
            <person name="van Staveren M."/>
            <person name="Dirkse W."/>
            <person name="Mooijman P."/>
            <person name="Klein Lankhorst R."/>
            <person name="Rose M."/>
            <person name="Hauf J."/>
            <person name="Koetter P."/>
            <person name="Berneiser S."/>
            <person name="Hempel S."/>
            <person name="Feldpausch M."/>
            <person name="Lamberth S."/>
            <person name="Van den Daele H."/>
            <person name="De Keyser A."/>
            <person name="Buysshaert C."/>
            <person name="Gielen J."/>
            <person name="Villarroel R."/>
            <person name="De Clercq R."/>
            <person name="van Montagu M."/>
            <person name="Rogers J."/>
            <person name="Cronin A."/>
            <person name="Quail M.A."/>
            <person name="Bray-Allen S."/>
            <person name="Clark L."/>
            <person name="Doggett J."/>
            <person name="Hall S."/>
            <person name="Kay M."/>
            <person name="Lennard N."/>
            <person name="McLay K."/>
            <person name="Mayes R."/>
            <person name="Pettett A."/>
            <person name="Rajandream M.A."/>
            <person name="Lyne M."/>
            <person name="Benes V."/>
            <person name="Rechmann S."/>
            <person name="Borkova D."/>
            <person name="Bloecker H."/>
            <person name="Scharfe M."/>
            <person name="Grimm M."/>
            <person name="Loehnert T.-H."/>
            <person name="Dose S."/>
            <person name="de Haan M."/>
            <person name="Maarse A.C."/>
            <person name="Schaefer M."/>
            <person name="Mueller-Auer S."/>
            <person name="Gabel C."/>
            <person name="Fuchs M."/>
            <person name="Fartmann B."/>
            <person name="Granderath K."/>
            <person name="Dauner D."/>
            <person name="Herzl A."/>
            <person name="Neumann S."/>
            <person name="Argiriou A."/>
            <person name="Vitale D."/>
            <person name="Liguori R."/>
            <person name="Piravandi E."/>
            <person name="Massenet O."/>
            <person name="Quigley F."/>
            <person name="Clabauld G."/>
            <person name="Muendlein A."/>
            <person name="Felber R."/>
            <person name="Schnabl S."/>
            <person name="Hiller R."/>
            <person name="Schmidt W."/>
            <person name="Lecharny A."/>
            <person name="Aubourg S."/>
            <person name="Chefdor F."/>
            <person name="Cooke R."/>
            <person name="Berger C."/>
            <person name="Monfort A."/>
            <person name="Casacuberta E."/>
            <person name="Gibbons T."/>
            <person name="Weber N."/>
            <person name="Vandenbol M."/>
            <person name="Bargues M."/>
            <person name="Terol J."/>
            <person name="Torres A."/>
            <person name="Perez-Perez A."/>
            <person name="Purnelle B."/>
            <person name="Bent E."/>
            <person name="Johnson S."/>
            <person name="Tacon D."/>
            <person name="Jesse T."/>
            <person name="Heijnen L."/>
            <person name="Schwarz S."/>
            <person name="Scholler P."/>
            <person name="Heber S."/>
            <person name="Francs P."/>
            <person name="Bielke C."/>
            <person name="Frishman D."/>
            <person name="Haase D."/>
            <person name="Lemcke K."/>
            <person name="Mewes H.-W."/>
            <person name="Stocker S."/>
            <person name="Zaccaria P."/>
            <person name="Bevan M."/>
            <person name="Wilson R.K."/>
            <person name="de la Bastide M."/>
            <person name="Habermann K."/>
            <person name="Parnell L."/>
            <person name="Dedhia N."/>
            <person name="Gnoj L."/>
            <person name="Schutz K."/>
            <person name="Huang E."/>
            <person name="Spiegel L."/>
            <person name="Sekhon M."/>
            <person name="Murray J."/>
            <person name="Sheet P."/>
            <person name="Cordes M."/>
            <person name="Abu-Threideh J."/>
            <person name="Stoneking T."/>
            <person name="Kalicki J."/>
            <person name="Graves T."/>
            <person name="Harmon G."/>
            <person name="Edwards J."/>
            <person name="Latreille P."/>
            <person name="Courtney L."/>
            <person name="Cloud J."/>
            <person name="Abbott A."/>
            <person name="Scott K."/>
            <person name="Johnson D."/>
            <person name="Minx P."/>
            <person name="Bentley D."/>
            <person name="Fulton B."/>
            <person name="Miller N."/>
            <person name="Greco T."/>
            <person name="Kemp K."/>
            <person name="Kramer J."/>
            <person name="Fulton L."/>
            <person name="Mardis E."/>
            <person name="Dante M."/>
            <person name="Pepin K."/>
            <person name="Hillier L.W."/>
            <person name="Nelson J."/>
            <person name="Spieth J."/>
            <person name="Ryan E."/>
            <person name="Andrews S."/>
            <person name="Geisel C."/>
            <person name="Layman D."/>
            <person name="Du H."/>
            <person name="Ali J."/>
            <person name="Berghoff A."/>
            <person name="Jones K."/>
            <person name="Drone K."/>
            <person name="Cotton M."/>
            <person name="Joshu C."/>
            <person name="Antonoiu B."/>
            <person name="Zidanic M."/>
            <person name="Strong C."/>
            <person name="Sun H."/>
            <person name="Lamar B."/>
            <person name="Yordan C."/>
            <person name="Ma P."/>
            <person name="Zhong J."/>
            <person name="Preston R."/>
            <person name="Vil D."/>
            <person name="Shekher M."/>
            <person name="Matero A."/>
            <person name="Shah R."/>
            <person name="Swaby I.K."/>
            <person name="O'Shaughnessy A."/>
            <person name="Rodriguez M."/>
            <person name="Hoffman J."/>
            <person name="Till S."/>
            <person name="Granat S."/>
            <person name="Shohdy N."/>
            <person name="Hasegawa A."/>
            <person name="Hameed A."/>
            <person name="Lodhi M."/>
            <person name="Johnson A."/>
            <person name="Chen E."/>
            <person name="Marra M.A."/>
            <person name="Martienssen R."/>
            <person name="McCombie W.R."/>
        </authorList>
    </citation>
    <scope>NUCLEOTIDE SEQUENCE [LARGE SCALE GENOMIC DNA]</scope>
    <source>
        <strain>cv. Columbia</strain>
    </source>
</reference>
<reference key="3">
    <citation type="journal article" date="2017" name="Plant J.">
        <title>Araport11: a complete reannotation of the Arabidopsis thaliana reference genome.</title>
        <authorList>
            <person name="Cheng C.Y."/>
            <person name="Krishnakumar V."/>
            <person name="Chan A.P."/>
            <person name="Thibaud-Nissen F."/>
            <person name="Schobel S."/>
            <person name="Town C.D."/>
        </authorList>
    </citation>
    <scope>GENOME REANNOTATION</scope>
    <source>
        <strain>cv. Columbia</strain>
    </source>
</reference>
<reference key="4">
    <citation type="submission" date="2004-12" db="EMBL/GenBank/DDBJ databases">
        <title>Arabidopsis ORF clones.</title>
        <authorList>
            <person name="Cheuk R.F."/>
            <person name="Chen H."/>
            <person name="Kim C.J."/>
            <person name="Shinn P."/>
            <person name="Ecker J.R."/>
        </authorList>
    </citation>
    <scope>NUCLEOTIDE SEQUENCE [LARGE SCALE MRNA]</scope>
    <source>
        <strain>cv. Columbia</strain>
    </source>
</reference>
<reference key="5">
    <citation type="journal article" date="2009" name="Mol. Plant">
        <title>HOS3, an ELO-like gene, inhibits effects of ABA and implicates a S-1-P/ceramide control system for abiotic stress responses in Arabidopsis thaliana.</title>
        <authorList>
            <person name="Quist T.M."/>
            <person name="Sokolchik I."/>
            <person name="Shi H."/>
            <person name="Joly R.J."/>
            <person name="Bressan R.A."/>
            <person name="Maggio A."/>
            <person name="Narsimhan M."/>
            <person name="Li X."/>
        </authorList>
    </citation>
    <scope>FUNCTION</scope>
    <scope>DISRUPTION PHENOTYPE</scope>
    <source>
        <strain>cv. C24</strain>
    </source>
</reference>
<dbReference type="EC" id="2.3.1.-"/>
<dbReference type="EMBL" id="Z99708">
    <property type="protein sequence ID" value="CAB16818.1"/>
    <property type="molecule type" value="Genomic_DNA"/>
</dbReference>
<dbReference type="EMBL" id="AL161590">
    <property type="protein sequence ID" value="CAB80349.1"/>
    <property type="molecule type" value="Genomic_DNA"/>
</dbReference>
<dbReference type="EMBL" id="CP002687">
    <property type="protein sequence ID" value="AEE86707.1"/>
    <property type="molecule type" value="Genomic_DNA"/>
</dbReference>
<dbReference type="EMBL" id="BT012601">
    <property type="protein sequence ID" value="AAT06420.1"/>
    <property type="molecule type" value="mRNA"/>
</dbReference>
<dbReference type="EMBL" id="BT020336">
    <property type="protein sequence ID" value="AAV85691.1"/>
    <property type="molecule type" value="mRNA"/>
</dbReference>
<dbReference type="PIR" id="H85434">
    <property type="entry name" value="H85434"/>
</dbReference>
<dbReference type="RefSeq" id="NP_195401.1">
    <property type="nucleotide sequence ID" value="NM_119847.4"/>
</dbReference>
<dbReference type="SMR" id="Q9SYY4"/>
<dbReference type="BioGRID" id="15117">
    <property type="interactions" value="14"/>
</dbReference>
<dbReference type="FunCoup" id="Q9SYY4">
    <property type="interactions" value="992"/>
</dbReference>
<dbReference type="IntAct" id="Q9SYY4">
    <property type="interactions" value="14"/>
</dbReference>
<dbReference type="STRING" id="3702.Q9SYY4"/>
<dbReference type="PaxDb" id="3702-AT4G36830.1"/>
<dbReference type="DNASU" id="829836"/>
<dbReference type="EnsemblPlants" id="AT4G36830.1">
    <property type="protein sequence ID" value="AT4G36830.1"/>
    <property type="gene ID" value="AT4G36830"/>
</dbReference>
<dbReference type="GeneID" id="829836"/>
<dbReference type="Gramene" id="AT4G36830.1">
    <property type="protein sequence ID" value="AT4G36830.1"/>
    <property type="gene ID" value="AT4G36830"/>
</dbReference>
<dbReference type="KEGG" id="ath:AT4G36830"/>
<dbReference type="Araport" id="AT4G36830"/>
<dbReference type="TAIR" id="AT4G36830">
    <property type="gene designation" value="HOS3-1"/>
</dbReference>
<dbReference type="eggNOG" id="KOG3071">
    <property type="taxonomic scope" value="Eukaryota"/>
</dbReference>
<dbReference type="HOGENOM" id="CLU_048483_6_0_1"/>
<dbReference type="InParanoid" id="Q9SYY4"/>
<dbReference type="OMA" id="HIMKGGC"/>
<dbReference type="PhylomeDB" id="Q9SYY4"/>
<dbReference type="PRO" id="PR:Q9SYY4"/>
<dbReference type="Proteomes" id="UP000006548">
    <property type="component" value="Chromosome 4"/>
</dbReference>
<dbReference type="ExpressionAtlas" id="Q9SYY4">
    <property type="expression patterns" value="baseline and differential"/>
</dbReference>
<dbReference type="GO" id="GO:0016020">
    <property type="term" value="C:membrane"/>
    <property type="evidence" value="ECO:0007669"/>
    <property type="project" value="UniProtKB-SubCell"/>
</dbReference>
<dbReference type="GO" id="GO:0009922">
    <property type="term" value="F:fatty acid elongase activity"/>
    <property type="evidence" value="ECO:0000314"/>
    <property type="project" value="UniProtKB"/>
</dbReference>
<dbReference type="GO" id="GO:0071215">
    <property type="term" value="P:cellular response to abscisic acid stimulus"/>
    <property type="evidence" value="ECO:0000315"/>
    <property type="project" value="UniProtKB"/>
</dbReference>
<dbReference type="GO" id="GO:0030497">
    <property type="term" value="P:fatty acid elongation"/>
    <property type="evidence" value="ECO:0000314"/>
    <property type="project" value="UniProtKB"/>
</dbReference>
<dbReference type="GO" id="GO:0042761">
    <property type="term" value="P:very long-chain fatty acid biosynthetic process"/>
    <property type="evidence" value="ECO:0000304"/>
    <property type="project" value="UniProtKB"/>
</dbReference>
<dbReference type="InterPro" id="IPR002076">
    <property type="entry name" value="ELO_fam"/>
</dbReference>
<dbReference type="PANTHER" id="PTHR11157:SF11">
    <property type="entry name" value="ELONGATION OF FATTY ACIDS PROTEIN 3-LIKE"/>
    <property type="match status" value="1"/>
</dbReference>
<dbReference type="PANTHER" id="PTHR11157">
    <property type="entry name" value="FATTY ACID ACYL TRANSFERASE-RELATED"/>
    <property type="match status" value="1"/>
</dbReference>
<dbReference type="Pfam" id="PF01151">
    <property type="entry name" value="ELO"/>
    <property type="match status" value="1"/>
</dbReference>
<proteinExistence type="evidence at transcript level"/>
<accession>Q9SYY4</accession>
<name>ELO3L_ARATH</name>
<protein>
    <recommendedName>
        <fullName evidence="3">Fatty acid elongase 3-like</fullName>
        <shortName>Protein ELO3-like</shortName>
        <ecNumber>2.3.1.-</ecNumber>
    </recommendedName>
    <alternativeName>
        <fullName>Elongation of fatty acids protein 3-like</fullName>
    </alternativeName>
    <alternativeName>
        <fullName>Protein HIGH EXPRESSION OF OSMOTICALLY RESPONSIVE GENES 3</fullName>
    </alternativeName>
    <alternativeName>
        <fullName>Very long-chain fatty acid condensing enzyme HOS3</fullName>
        <shortName>VLCFA condensing enzyme HOS3</shortName>
    </alternativeName>
</protein>
<organism>
    <name type="scientific">Arabidopsis thaliana</name>
    <name type="common">Mouse-ear cress</name>
    <dbReference type="NCBI Taxonomy" id="3702"/>
    <lineage>
        <taxon>Eukaryota</taxon>
        <taxon>Viridiplantae</taxon>
        <taxon>Streptophyta</taxon>
        <taxon>Embryophyta</taxon>
        <taxon>Tracheophyta</taxon>
        <taxon>Spermatophyta</taxon>
        <taxon>Magnoliopsida</taxon>
        <taxon>eudicotyledons</taxon>
        <taxon>Gunneridae</taxon>
        <taxon>Pentapetalae</taxon>
        <taxon>rosids</taxon>
        <taxon>malvids</taxon>
        <taxon>Brassicales</taxon>
        <taxon>Brassicaceae</taxon>
        <taxon>Camelineae</taxon>
        <taxon>Arabidopsis</taxon>
    </lineage>
</organism>
<feature type="chain" id="PRO_0000430307" description="Fatty acid elongase 3-like">
    <location>
        <begin position="1"/>
        <end position="289"/>
    </location>
</feature>
<feature type="transmembrane region" description="Helical; Name=1" evidence="1">
    <location>
        <begin position="35"/>
        <end position="55"/>
    </location>
</feature>
<feature type="transmembrane region" description="Helical; Name=2" evidence="1">
    <location>
        <begin position="75"/>
        <end position="95"/>
    </location>
</feature>
<feature type="transmembrane region" description="Helical; Name=3" evidence="1">
    <location>
        <begin position="129"/>
        <end position="149"/>
    </location>
</feature>
<feature type="transmembrane region" description="Helical; Name=4" evidence="1">
    <location>
        <begin position="157"/>
        <end position="176"/>
    </location>
</feature>
<feature type="transmembrane region" description="Helical; Name=5" evidence="1">
    <location>
        <begin position="181"/>
        <end position="203"/>
    </location>
</feature>
<feature type="transmembrane region" description="Helical; Name=6" evidence="1">
    <location>
        <begin position="205"/>
        <end position="225"/>
    </location>
</feature>
<feature type="transmembrane region" description="Helical; Name=7" evidence="1">
    <location>
        <begin position="248"/>
        <end position="268"/>
    </location>
</feature>
<comment type="function">
    <text evidence="2">Probable very long-chain fatty acid (VLCFA) elongase that controls VLCFA composition and functions to inhibit abscisic acid (ABA)-mediated stress responses, including regulation of stomatal aperture, maintenance of primary root growth and inhibition of germination. VLCFA pathway and products may function as signaling components acting upstream of sphingosine-1-phosphate, ceramide and the heterotrimeric G-protein complex, in lipid-mediated regulation of abiotic stress signaling.</text>
</comment>
<comment type="subcellular location">
    <subcellularLocation>
        <location evidence="3">Membrane</location>
        <topology evidence="3">Multi-pass membrane protein</topology>
    </subcellularLocation>
</comment>
<comment type="disruption phenotype">
    <text evidence="2">No visible phenotype under normal growth conditions, but mutant plants show decreased abscisic acid (ABA)-induced inhibition of root growth and seed dormancy, and enhanced ABA-mediated stomatal closure.</text>
</comment>
<comment type="similarity">
    <text evidence="3">Belongs to the ELO family.</text>
</comment>
<sequence length="289" mass="32782">MSTALINSITYFLSEHPYIVGFRWSNSQSWGSTWSFLFTSISLYIAVSSSLHILLSAVRRSNRSVPLGHIPEIHSLLMSILSATIFAGILLSAAAEIRDTRWLWRRSKTATPLQWLLCFPLGTRPSGRVFFWSYVFYLTRFLHMFRTIFAVLRSRRLAVSQLFCNSVMAFTSFLWLEFSQSYQILAILSTTLVYSVVYGYRFWTGFGLPGSAFPSFVVNCQLVLVGCNLVSHAGVLTMHLFKGGCNGIGAWGLNSVLNGAILLLFLNFYVRMHSPMRRHINKMNSQRNA</sequence>